<gene>
    <name evidence="1" type="primary">dnaA</name>
    <name type="ordered locus">BB4989</name>
</gene>
<comment type="function">
    <text evidence="1">Plays an essential role in the initiation and regulation of chromosomal replication. ATP-DnaA binds to the origin of replication (oriC) to initiate formation of the DNA replication initiation complex once per cell cycle. Binds the DnaA box (a 9 base pair repeat at the origin) and separates the double-stranded (ds)DNA. Forms a right-handed helical filament on oriC DNA; dsDNA binds to the exterior of the filament while single-stranded (ss)DNA is stabiized in the filament's interior. The ATP-DnaA-oriC complex binds and stabilizes one strand of the AT-rich DNA unwinding element (DUE), permitting loading of DNA polymerase. After initiation quickly degrades to an ADP-DnaA complex that is not apt for DNA replication. Binds acidic phospholipids.</text>
</comment>
<comment type="subunit">
    <text evidence="1">Oligomerizes as a right-handed, spiral filament on DNA at oriC.</text>
</comment>
<comment type="subcellular location">
    <subcellularLocation>
        <location evidence="1">Cytoplasm</location>
    </subcellularLocation>
</comment>
<comment type="domain">
    <text evidence="1">Domain I is involved in oligomerization and binding regulators, domain II is flexibile and of varying length in different bacteria, domain III forms the AAA+ region, while domain IV binds dsDNA.</text>
</comment>
<comment type="similarity">
    <text evidence="1">Belongs to the DnaA family.</text>
</comment>
<accession>Q7WDJ9</accession>
<proteinExistence type="inferred from homology"/>
<organism>
    <name type="scientific">Bordetella bronchiseptica (strain ATCC BAA-588 / NCTC 13252 / RB50)</name>
    <name type="common">Alcaligenes bronchisepticus</name>
    <dbReference type="NCBI Taxonomy" id="257310"/>
    <lineage>
        <taxon>Bacteria</taxon>
        <taxon>Pseudomonadati</taxon>
        <taxon>Pseudomonadota</taxon>
        <taxon>Betaproteobacteria</taxon>
        <taxon>Burkholderiales</taxon>
        <taxon>Alcaligenaceae</taxon>
        <taxon>Bordetella</taxon>
    </lineage>
</organism>
<keyword id="KW-0067">ATP-binding</keyword>
<keyword id="KW-0963">Cytoplasm</keyword>
<keyword id="KW-0235">DNA replication</keyword>
<keyword id="KW-0238">DNA-binding</keyword>
<keyword id="KW-0446">Lipid-binding</keyword>
<keyword id="KW-0547">Nucleotide-binding</keyword>
<dbReference type="EMBL" id="BX640452">
    <property type="protein sequence ID" value="CAE35353.1"/>
    <property type="molecule type" value="Genomic_DNA"/>
</dbReference>
<dbReference type="RefSeq" id="WP_010927253.1">
    <property type="nucleotide sequence ID" value="NC_002927.3"/>
</dbReference>
<dbReference type="SMR" id="Q7WDJ9"/>
<dbReference type="KEGG" id="bbr:BB4989"/>
<dbReference type="eggNOG" id="COG0593">
    <property type="taxonomic scope" value="Bacteria"/>
</dbReference>
<dbReference type="HOGENOM" id="CLU_026910_0_1_4"/>
<dbReference type="Proteomes" id="UP000001027">
    <property type="component" value="Chromosome"/>
</dbReference>
<dbReference type="GO" id="GO:0005737">
    <property type="term" value="C:cytoplasm"/>
    <property type="evidence" value="ECO:0007669"/>
    <property type="project" value="UniProtKB-SubCell"/>
</dbReference>
<dbReference type="GO" id="GO:0005886">
    <property type="term" value="C:plasma membrane"/>
    <property type="evidence" value="ECO:0007669"/>
    <property type="project" value="TreeGrafter"/>
</dbReference>
<dbReference type="GO" id="GO:0005524">
    <property type="term" value="F:ATP binding"/>
    <property type="evidence" value="ECO:0007669"/>
    <property type="project" value="UniProtKB-UniRule"/>
</dbReference>
<dbReference type="GO" id="GO:0016887">
    <property type="term" value="F:ATP hydrolysis activity"/>
    <property type="evidence" value="ECO:0007669"/>
    <property type="project" value="InterPro"/>
</dbReference>
<dbReference type="GO" id="GO:0003688">
    <property type="term" value="F:DNA replication origin binding"/>
    <property type="evidence" value="ECO:0007669"/>
    <property type="project" value="UniProtKB-UniRule"/>
</dbReference>
<dbReference type="GO" id="GO:0008289">
    <property type="term" value="F:lipid binding"/>
    <property type="evidence" value="ECO:0007669"/>
    <property type="project" value="UniProtKB-KW"/>
</dbReference>
<dbReference type="GO" id="GO:0006270">
    <property type="term" value="P:DNA replication initiation"/>
    <property type="evidence" value="ECO:0007669"/>
    <property type="project" value="UniProtKB-UniRule"/>
</dbReference>
<dbReference type="GO" id="GO:0006275">
    <property type="term" value="P:regulation of DNA replication"/>
    <property type="evidence" value="ECO:0007669"/>
    <property type="project" value="UniProtKB-UniRule"/>
</dbReference>
<dbReference type="CDD" id="cd00009">
    <property type="entry name" value="AAA"/>
    <property type="match status" value="1"/>
</dbReference>
<dbReference type="CDD" id="cd06571">
    <property type="entry name" value="Bac_DnaA_C"/>
    <property type="match status" value="1"/>
</dbReference>
<dbReference type="FunFam" id="1.10.8.60:FF:000003">
    <property type="entry name" value="Chromosomal replication initiator protein DnaA"/>
    <property type="match status" value="1"/>
</dbReference>
<dbReference type="FunFam" id="3.40.50.300:FF:000668">
    <property type="entry name" value="Chromosomal replication initiator protein DnaA"/>
    <property type="match status" value="1"/>
</dbReference>
<dbReference type="Gene3D" id="1.10.1750.10">
    <property type="match status" value="1"/>
</dbReference>
<dbReference type="Gene3D" id="1.10.8.60">
    <property type="match status" value="1"/>
</dbReference>
<dbReference type="Gene3D" id="3.30.300.180">
    <property type="match status" value="1"/>
</dbReference>
<dbReference type="Gene3D" id="3.40.50.300">
    <property type="entry name" value="P-loop containing nucleotide triphosphate hydrolases"/>
    <property type="match status" value="1"/>
</dbReference>
<dbReference type="HAMAP" id="MF_00377">
    <property type="entry name" value="DnaA_bact"/>
    <property type="match status" value="1"/>
</dbReference>
<dbReference type="InterPro" id="IPR003593">
    <property type="entry name" value="AAA+_ATPase"/>
</dbReference>
<dbReference type="InterPro" id="IPR001957">
    <property type="entry name" value="Chromosome_initiator_DnaA"/>
</dbReference>
<dbReference type="InterPro" id="IPR020591">
    <property type="entry name" value="Chromosome_initiator_DnaA-like"/>
</dbReference>
<dbReference type="InterPro" id="IPR018312">
    <property type="entry name" value="Chromosome_initiator_DnaA_CS"/>
</dbReference>
<dbReference type="InterPro" id="IPR013159">
    <property type="entry name" value="DnaA_C"/>
</dbReference>
<dbReference type="InterPro" id="IPR013317">
    <property type="entry name" value="DnaA_dom"/>
</dbReference>
<dbReference type="InterPro" id="IPR024633">
    <property type="entry name" value="DnaA_N_dom"/>
</dbReference>
<dbReference type="InterPro" id="IPR038454">
    <property type="entry name" value="DnaA_N_sf"/>
</dbReference>
<dbReference type="InterPro" id="IPR027417">
    <property type="entry name" value="P-loop_NTPase"/>
</dbReference>
<dbReference type="InterPro" id="IPR010921">
    <property type="entry name" value="Trp_repressor/repl_initiator"/>
</dbReference>
<dbReference type="NCBIfam" id="TIGR00362">
    <property type="entry name" value="DnaA"/>
    <property type="match status" value="1"/>
</dbReference>
<dbReference type="PANTHER" id="PTHR30050">
    <property type="entry name" value="CHROMOSOMAL REPLICATION INITIATOR PROTEIN DNAA"/>
    <property type="match status" value="1"/>
</dbReference>
<dbReference type="PANTHER" id="PTHR30050:SF2">
    <property type="entry name" value="CHROMOSOMAL REPLICATION INITIATOR PROTEIN DNAA"/>
    <property type="match status" value="1"/>
</dbReference>
<dbReference type="Pfam" id="PF00308">
    <property type="entry name" value="Bac_DnaA"/>
    <property type="match status" value="1"/>
</dbReference>
<dbReference type="Pfam" id="PF08299">
    <property type="entry name" value="Bac_DnaA_C"/>
    <property type="match status" value="1"/>
</dbReference>
<dbReference type="Pfam" id="PF11638">
    <property type="entry name" value="DnaA_N"/>
    <property type="match status" value="1"/>
</dbReference>
<dbReference type="PRINTS" id="PR00051">
    <property type="entry name" value="DNAA"/>
</dbReference>
<dbReference type="SMART" id="SM00382">
    <property type="entry name" value="AAA"/>
    <property type="match status" value="1"/>
</dbReference>
<dbReference type="SMART" id="SM00760">
    <property type="entry name" value="Bac_DnaA_C"/>
    <property type="match status" value="1"/>
</dbReference>
<dbReference type="SUPFAM" id="SSF52540">
    <property type="entry name" value="P-loop containing nucleoside triphosphate hydrolases"/>
    <property type="match status" value="1"/>
</dbReference>
<dbReference type="SUPFAM" id="SSF48295">
    <property type="entry name" value="TrpR-like"/>
    <property type="match status" value="1"/>
</dbReference>
<dbReference type="PROSITE" id="PS01008">
    <property type="entry name" value="DNAA"/>
    <property type="match status" value="1"/>
</dbReference>
<feature type="chain" id="PRO_0000114139" description="Chromosomal replication initiator protein DnaA">
    <location>
        <begin position="1"/>
        <end position="480"/>
    </location>
</feature>
<feature type="region of interest" description="Domain I, interacts with DnaA modulators" evidence="1">
    <location>
        <begin position="1"/>
        <end position="71"/>
    </location>
</feature>
<feature type="region of interest" description="Domain II" evidence="1">
    <location>
        <begin position="71"/>
        <end position="142"/>
    </location>
</feature>
<feature type="region of interest" description="Domain III, AAA+ region" evidence="1">
    <location>
        <begin position="143"/>
        <end position="359"/>
    </location>
</feature>
<feature type="region of interest" description="Domain IV, binds dsDNA" evidence="1">
    <location>
        <begin position="360"/>
        <end position="480"/>
    </location>
</feature>
<feature type="binding site" evidence="1">
    <location>
        <position position="187"/>
    </location>
    <ligand>
        <name>ATP</name>
        <dbReference type="ChEBI" id="CHEBI:30616"/>
    </ligand>
</feature>
<feature type="binding site" evidence="1">
    <location>
        <position position="189"/>
    </location>
    <ligand>
        <name>ATP</name>
        <dbReference type="ChEBI" id="CHEBI:30616"/>
    </ligand>
</feature>
<feature type="binding site" evidence="1">
    <location>
        <position position="190"/>
    </location>
    <ligand>
        <name>ATP</name>
        <dbReference type="ChEBI" id="CHEBI:30616"/>
    </ligand>
</feature>
<feature type="binding site" evidence="1">
    <location>
        <position position="191"/>
    </location>
    <ligand>
        <name>ATP</name>
        <dbReference type="ChEBI" id="CHEBI:30616"/>
    </ligand>
</feature>
<reference key="1">
    <citation type="journal article" date="2003" name="Nat. Genet.">
        <title>Comparative analysis of the genome sequences of Bordetella pertussis, Bordetella parapertussis and Bordetella bronchiseptica.</title>
        <authorList>
            <person name="Parkhill J."/>
            <person name="Sebaihia M."/>
            <person name="Preston A."/>
            <person name="Murphy L.D."/>
            <person name="Thomson N.R."/>
            <person name="Harris D.E."/>
            <person name="Holden M.T.G."/>
            <person name="Churcher C.M."/>
            <person name="Bentley S.D."/>
            <person name="Mungall K.L."/>
            <person name="Cerdeno-Tarraga A.-M."/>
            <person name="Temple L."/>
            <person name="James K.D."/>
            <person name="Harris B."/>
            <person name="Quail M.A."/>
            <person name="Achtman M."/>
            <person name="Atkin R."/>
            <person name="Baker S."/>
            <person name="Basham D."/>
            <person name="Bason N."/>
            <person name="Cherevach I."/>
            <person name="Chillingworth T."/>
            <person name="Collins M."/>
            <person name="Cronin A."/>
            <person name="Davis P."/>
            <person name="Doggett J."/>
            <person name="Feltwell T."/>
            <person name="Goble A."/>
            <person name="Hamlin N."/>
            <person name="Hauser H."/>
            <person name="Holroyd S."/>
            <person name="Jagels K."/>
            <person name="Leather S."/>
            <person name="Moule S."/>
            <person name="Norberczak H."/>
            <person name="O'Neil S."/>
            <person name="Ormond D."/>
            <person name="Price C."/>
            <person name="Rabbinowitsch E."/>
            <person name="Rutter S."/>
            <person name="Sanders M."/>
            <person name="Saunders D."/>
            <person name="Seeger K."/>
            <person name="Sharp S."/>
            <person name="Simmonds M."/>
            <person name="Skelton J."/>
            <person name="Squares R."/>
            <person name="Squares S."/>
            <person name="Stevens K."/>
            <person name="Unwin L."/>
            <person name="Whitehead S."/>
            <person name="Barrell B.G."/>
            <person name="Maskell D.J."/>
        </authorList>
    </citation>
    <scope>NUCLEOTIDE SEQUENCE [LARGE SCALE GENOMIC DNA]</scope>
    <source>
        <strain>ATCC BAA-588 / NCTC 13252 / RB50</strain>
    </source>
</reference>
<evidence type="ECO:0000255" key="1">
    <source>
        <dbReference type="HAMAP-Rule" id="MF_00377"/>
    </source>
</evidence>
<name>DNAA_BORBR</name>
<sequence length="480" mass="53307">MKEFWQTCVSRLEQELPPQQISAWIRPLVPLAYDEAQAVLRVAAPNRFKLDWVRKNFSHQIEALAAEWYQRPVQVTFELPGTSSAPRIPMAVPRPVAVSVPAVVAAVQQASEPAPPAPAPAPAAPAPAPASADAANIVYERSRLNTDLTFENFVTGKANQLARAAALQVAENPGTSYNPLFLYGGVGLGKTHLIHAIGNAMVAAGTGVRVRYVHADQYVSDVVKAYQRKAFDDFKRYYHSLDLLLIDDIQFFSGKNRTQEEFFYAFEAMVAQRKQIIITSDTYPKELSGIDSRLISRFDSGLTVAIEPPELEMRVAILLRKAESEGVPMPEEVAFFIAKHLRSNVRELEGALRKVLAYARFHGRDVLTVDVCKEALKDLLSVSNGQITVENIQKTVADFYKIKVADMYSKRRPANIALPRQVAMYLAKELTQKSLPEIGDLFGGRDHTTVLHAVRKISDARAKQAELNHTLHVLEQTLKG</sequence>
<protein>
    <recommendedName>
        <fullName evidence="1">Chromosomal replication initiator protein DnaA</fullName>
    </recommendedName>
</protein>